<sequence length="166" mass="18867">MNIRQQITQFLSLAYVFSSAFMLWKTLSVIANSHSPIVVVLSGSMEPAFQRGDILFLWNRDHQQKVGDIVVYEIDGKSIPIVHRVLREHHNSEKQLLLTKGDNNAVDDLSLYAKKQQYLNQKQDLVGTVKGYLPFIGYVTILISENVYFKYGMLGLLGLSSLFSNE</sequence>
<comment type="function">
    <text evidence="1 2">Catalytic component of the signal peptidase complex (SPC) which catalyzes the cleavage of N-terminal signal sequences from nascent proteins as they are translocated into the lumen of the endoplasmic reticulum (By similarity). Specifically cleaves N-terminal signal peptides that contain a hydrophobic alpha-helix (h-region) shorter than 18-20 amino acids (By similarity).</text>
</comment>
<comment type="catalytic activity">
    <reaction evidence="1">
        <text>Cleavage of hydrophobic, N-terminal signal or leader sequences from secreted and periplasmic proteins.</text>
        <dbReference type="EC" id="3.4.21.89"/>
    </reaction>
</comment>
<comment type="subunit">
    <text evidence="1 2">Component of the signal peptidase complex (SPC) composed of a catalytic subunit SEC11 and three accessory subunits SPC1, SPC2 and SPC3 (By similarity). The complex induces a local thinning of the ER membrane which is used to measure the length of the signal peptide (SP) h-region of protein substrates. This ensures the selectivity of the complex towards h-regions shorter than 18-20 amino acids (By similarity). SPC associates with the translocon complex (By similarity).</text>
</comment>
<comment type="subcellular location">
    <subcellularLocation>
        <location evidence="1">Endoplasmic reticulum membrane</location>
        <topology evidence="1">Single-pass type II membrane protein</topology>
    </subcellularLocation>
</comment>
<comment type="domain">
    <text evidence="2">The C-terminal short (CTS) helix is essential for catalytic activity. It may be accommodated as a transmembrane helix in the thinned membrane environment of the complex, similarly to the signal peptide in the complex substrates.</text>
</comment>
<comment type="similarity">
    <text evidence="4">Belongs to the peptidase S26B family.</text>
</comment>
<protein>
    <recommendedName>
        <fullName>Signal peptidase complex catalytic subunit SEC11</fullName>
        <ecNumber evidence="1">3.4.21.89</ecNumber>
    </recommendedName>
    <alternativeName>
        <fullName>Signal peptidase I</fullName>
    </alternativeName>
</protein>
<proteinExistence type="inferred from homology"/>
<organism>
    <name type="scientific">Candida albicans (strain WO-1)</name>
    <name type="common">Yeast</name>
    <dbReference type="NCBI Taxonomy" id="294748"/>
    <lineage>
        <taxon>Eukaryota</taxon>
        <taxon>Fungi</taxon>
        <taxon>Dikarya</taxon>
        <taxon>Ascomycota</taxon>
        <taxon>Saccharomycotina</taxon>
        <taxon>Pichiomycetes</taxon>
        <taxon>Debaryomycetaceae</taxon>
        <taxon>Candida/Lodderomyces clade</taxon>
        <taxon>Candida</taxon>
    </lineage>
</organism>
<dbReference type="EC" id="3.4.21.89" evidence="1"/>
<dbReference type="EMBL" id="CM000309">
    <property type="protein sequence ID" value="EEQ43223.1"/>
    <property type="molecule type" value="Genomic_DNA"/>
</dbReference>
<dbReference type="SMR" id="C4YNJ0"/>
<dbReference type="MEROPS" id="S26.010"/>
<dbReference type="PaxDb" id="5476-C4YNJ0"/>
<dbReference type="VEuPathDB" id="FungiDB:CAWG_01452"/>
<dbReference type="HOGENOM" id="CLU_089996_0_1_1"/>
<dbReference type="OMA" id="ILMNEYP"/>
<dbReference type="OrthoDB" id="4251at766764"/>
<dbReference type="Proteomes" id="UP000001429">
    <property type="component" value="Chromosome R"/>
</dbReference>
<dbReference type="GO" id="GO:0005787">
    <property type="term" value="C:signal peptidase complex"/>
    <property type="evidence" value="ECO:0007669"/>
    <property type="project" value="TreeGrafter"/>
</dbReference>
<dbReference type="GO" id="GO:0004252">
    <property type="term" value="F:serine-type endopeptidase activity"/>
    <property type="evidence" value="ECO:0007669"/>
    <property type="project" value="UniProtKB-EC"/>
</dbReference>
<dbReference type="GO" id="GO:0006465">
    <property type="term" value="P:signal peptide processing"/>
    <property type="evidence" value="ECO:0007669"/>
    <property type="project" value="InterPro"/>
</dbReference>
<dbReference type="CDD" id="cd06530">
    <property type="entry name" value="S26_SPase_I"/>
    <property type="match status" value="1"/>
</dbReference>
<dbReference type="InterPro" id="IPR036286">
    <property type="entry name" value="LexA/Signal_pep-like_sf"/>
</dbReference>
<dbReference type="InterPro" id="IPR019756">
    <property type="entry name" value="Pept_S26A_signal_pept_1_Ser-AS"/>
</dbReference>
<dbReference type="InterPro" id="IPR015927">
    <property type="entry name" value="Peptidase_S24_S26A/B/C"/>
</dbReference>
<dbReference type="InterPro" id="IPR019533">
    <property type="entry name" value="Peptidase_S26"/>
</dbReference>
<dbReference type="InterPro" id="IPR001733">
    <property type="entry name" value="Peptidase_S26B"/>
</dbReference>
<dbReference type="NCBIfam" id="TIGR02228">
    <property type="entry name" value="sigpep_I_arch"/>
    <property type="match status" value="1"/>
</dbReference>
<dbReference type="PANTHER" id="PTHR10806">
    <property type="entry name" value="SIGNAL PEPTIDASE COMPLEX CATALYTIC SUBUNIT SEC11"/>
    <property type="match status" value="1"/>
</dbReference>
<dbReference type="PANTHER" id="PTHR10806:SF6">
    <property type="entry name" value="SIGNAL PEPTIDASE COMPLEX CATALYTIC SUBUNIT SEC11"/>
    <property type="match status" value="1"/>
</dbReference>
<dbReference type="Pfam" id="PF00717">
    <property type="entry name" value="Peptidase_S24"/>
    <property type="match status" value="1"/>
</dbReference>
<dbReference type="PRINTS" id="PR00728">
    <property type="entry name" value="SIGNALPTASE"/>
</dbReference>
<dbReference type="SUPFAM" id="SSF51306">
    <property type="entry name" value="LexA/Signal peptidase"/>
    <property type="match status" value="1"/>
</dbReference>
<dbReference type="PROSITE" id="PS00501">
    <property type="entry name" value="SPASE_I_1"/>
    <property type="match status" value="1"/>
</dbReference>
<dbReference type="PROSITE" id="PS00761">
    <property type="entry name" value="SPASE_I_3"/>
    <property type="match status" value="1"/>
</dbReference>
<gene>
    <name type="primary">SEC11</name>
    <name type="ORF">CAWG_01452</name>
</gene>
<reference key="1">
    <citation type="journal article" date="2009" name="Nature">
        <title>Evolution of pathogenicity and sexual reproduction in eight Candida genomes.</title>
        <authorList>
            <person name="Butler G."/>
            <person name="Rasmussen M.D."/>
            <person name="Lin M.F."/>
            <person name="Santos M.A.S."/>
            <person name="Sakthikumar S."/>
            <person name="Munro C.A."/>
            <person name="Rheinbay E."/>
            <person name="Grabherr M."/>
            <person name="Forche A."/>
            <person name="Reedy J.L."/>
            <person name="Agrafioti I."/>
            <person name="Arnaud M.B."/>
            <person name="Bates S."/>
            <person name="Brown A.J.P."/>
            <person name="Brunke S."/>
            <person name="Costanzo M.C."/>
            <person name="Fitzpatrick D.A."/>
            <person name="de Groot P.W.J."/>
            <person name="Harris D."/>
            <person name="Hoyer L.L."/>
            <person name="Hube B."/>
            <person name="Klis F.M."/>
            <person name="Kodira C."/>
            <person name="Lennard N."/>
            <person name="Logue M.E."/>
            <person name="Martin R."/>
            <person name="Neiman A.M."/>
            <person name="Nikolaou E."/>
            <person name="Quail M.A."/>
            <person name="Quinn J."/>
            <person name="Santos M.C."/>
            <person name="Schmitzberger F.F."/>
            <person name="Sherlock G."/>
            <person name="Shah P."/>
            <person name="Silverstein K.A.T."/>
            <person name="Skrzypek M.S."/>
            <person name="Soll D."/>
            <person name="Staggs R."/>
            <person name="Stansfield I."/>
            <person name="Stumpf M.P.H."/>
            <person name="Sudbery P.E."/>
            <person name="Srikantha T."/>
            <person name="Zeng Q."/>
            <person name="Berman J."/>
            <person name="Berriman M."/>
            <person name="Heitman J."/>
            <person name="Gow N.A.R."/>
            <person name="Lorenz M.C."/>
            <person name="Birren B.W."/>
            <person name="Kellis M."/>
            <person name="Cuomo C.A."/>
        </authorList>
    </citation>
    <scope>NUCLEOTIDE SEQUENCE [LARGE SCALE GENOMIC DNA]</scope>
    <source>
        <strain>WO-1</strain>
    </source>
</reference>
<feature type="chain" id="PRO_0000412319" description="Signal peptidase complex catalytic subunit SEC11">
    <location>
        <begin position="1"/>
        <end position="166"/>
    </location>
</feature>
<feature type="topological domain" description="Cytoplasmic" evidence="3">
    <location>
        <begin position="1"/>
        <end position="9"/>
    </location>
</feature>
<feature type="transmembrane region" description="Helical; Signal-anchor for type II membrane protein" evidence="3">
    <location>
        <begin position="10"/>
        <end position="30"/>
    </location>
</feature>
<feature type="topological domain" description="Lumenal" evidence="3">
    <location>
        <begin position="31"/>
        <end position="166"/>
    </location>
</feature>
<feature type="region of interest" description="C-terminal short (CTS) helix" evidence="2">
    <location>
        <begin position="152"/>
        <end position="163"/>
    </location>
</feature>
<feature type="active site" description="Charge relay system" evidence="1">
    <location>
        <position position="44"/>
    </location>
</feature>
<feature type="active site" description="Charge relay system" evidence="1">
    <location>
        <position position="83"/>
    </location>
</feature>
<feature type="active site" description="Charge relay system" evidence="1">
    <location>
        <position position="108"/>
    </location>
</feature>
<name>SEC11_CANAW</name>
<accession>C4YNJ0</accession>
<keyword id="KW-0256">Endoplasmic reticulum</keyword>
<keyword id="KW-0378">Hydrolase</keyword>
<keyword id="KW-0472">Membrane</keyword>
<keyword id="KW-0645">Protease</keyword>
<keyword id="KW-0735">Signal-anchor</keyword>
<keyword id="KW-0812">Transmembrane</keyword>
<keyword id="KW-1133">Transmembrane helix</keyword>
<evidence type="ECO:0000250" key="1">
    <source>
        <dbReference type="UniProtKB" id="P15367"/>
    </source>
</evidence>
<evidence type="ECO:0000250" key="2">
    <source>
        <dbReference type="UniProtKB" id="P67812"/>
    </source>
</evidence>
<evidence type="ECO:0000255" key="3"/>
<evidence type="ECO:0000305" key="4"/>